<accession>Q7A6T4</accession>
<keyword id="KW-0963">Cytoplasm</keyword>
<keyword id="KW-0521">NADP</keyword>
<keyword id="KW-0560">Oxidoreductase</keyword>
<keyword id="KW-0671">Queuosine biosynthesis</keyword>
<name>QUEF_STAAN</name>
<proteinExistence type="inferred from homology"/>
<sequence length="166" mass="19645">MAHGRQQDELQDITLLGNQDNTYNFDYRPDVLESFDNKHQGRDYFVKFNCPEFTSLCPITGQPDFATIYISYIPNVKMVESKSLKLYLFSFRNHGDFHEDCMNIIMNDLIELMDPHYIEVWGKFTPRGGISIDPYTNYGRPNSKYEKMAEHRLMNHDLYPEKIDNR</sequence>
<evidence type="ECO:0000255" key="1">
    <source>
        <dbReference type="HAMAP-Rule" id="MF_00818"/>
    </source>
</evidence>
<feature type="chain" id="PRO_0000162999" description="NADPH-dependent 7-cyano-7-deazaguanine reductase">
    <location>
        <begin position="1"/>
        <end position="166"/>
    </location>
</feature>
<feature type="active site" description="Thioimide intermediate" evidence="1">
    <location>
        <position position="57"/>
    </location>
</feature>
<feature type="active site" description="Proton donor" evidence="1">
    <location>
        <position position="64"/>
    </location>
</feature>
<feature type="binding site" evidence="1">
    <location>
        <begin position="79"/>
        <end position="81"/>
    </location>
    <ligand>
        <name>substrate</name>
    </ligand>
</feature>
<feature type="binding site" evidence="1">
    <location>
        <begin position="98"/>
        <end position="99"/>
    </location>
    <ligand>
        <name>substrate</name>
    </ligand>
</feature>
<organism>
    <name type="scientific">Staphylococcus aureus (strain N315)</name>
    <dbReference type="NCBI Taxonomy" id="158879"/>
    <lineage>
        <taxon>Bacteria</taxon>
        <taxon>Bacillati</taxon>
        <taxon>Bacillota</taxon>
        <taxon>Bacilli</taxon>
        <taxon>Bacillales</taxon>
        <taxon>Staphylococcaceae</taxon>
        <taxon>Staphylococcus</taxon>
    </lineage>
</organism>
<protein>
    <recommendedName>
        <fullName evidence="1">NADPH-dependent 7-cyano-7-deazaguanine reductase</fullName>
        <ecNumber evidence="1">1.7.1.13</ecNumber>
    </recommendedName>
    <alternativeName>
        <fullName evidence="1">7-cyano-7-carbaguanine reductase</fullName>
    </alternativeName>
    <alternativeName>
        <fullName evidence="1">NADPH-dependent nitrile oxidoreductase</fullName>
    </alternativeName>
    <alternativeName>
        <fullName evidence="1">PreQ(0) reductase</fullName>
    </alternativeName>
</protein>
<comment type="function">
    <text evidence="1">Catalyzes the NADPH-dependent reduction of 7-cyano-7-deazaguanine (preQ0) to 7-aminomethyl-7-deazaguanine (preQ1).</text>
</comment>
<comment type="catalytic activity">
    <reaction evidence="1">
        <text>7-aminomethyl-7-carbaguanine + 2 NADP(+) = 7-cyano-7-deazaguanine + 2 NADPH + 3 H(+)</text>
        <dbReference type="Rhea" id="RHEA:13409"/>
        <dbReference type="ChEBI" id="CHEBI:15378"/>
        <dbReference type="ChEBI" id="CHEBI:45075"/>
        <dbReference type="ChEBI" id="CHEBI:57783"/>
        <dbReference type="ChEBI" id="CHEBI:58349"/>
        <dbReference type="ChEBI" id="CHEBI:58703"/>
        <dbReference type="EC" id="1.7.1.13"/>
    </reaction>
</comment>
<comment type="pathway">
    <text evidence="1">tRNA modification; tRNA-queuosine biosynthesis.</text>
</comment>
<comment type="subcellular location">
    <subcellularLocation>
        <location evidence="1">Cytoplasm</location>
    </subcellularLocation>
</comment>
<comment type="similarity">
    <text evidence="1">Belongs to the GTP cyclohydrolase I family. QueF type 1 subfamily.</text>
</comment>
<dbReference type="EC" id="1.7.1.13" evidence="1"/>
<dbReference type="EMBL" id="BA000018">
    <property type="protein sequence ID" value="BAB41916.1"/>
    <property type="molecule type" value="Genomic_DNA"/>
</dbReference>
<dbReference type="PIR" id="A89845">
    <property type="entry name" value="A89845"/>
</dbReference>
<dbReference type="RefSeq" id="WP_000930014.1">
    <property type="nucleotide sequence ID" value="NC_002745.2"/>
</dbReference>
<dbReference type="SMR" id="Q7A6T4"/>
<dbReference type="EnsemblBacteria" id="BAB41916">
    <property type="protein sequence ID" value="BAB41916"/>
    <property type="gene ID" value="BAB41916"/>
</dbReference>
<dbReference type="KEGG" id="sau:SA0683"/>
<dbReference type="HOGENOM" id="CLU_102489_0_1_9"/>
<dbReference type="UniPathway" id="UPA00392"/>
<dbReference type="GO" id="GO:0005737">
    <property type="term" value="C:cytoplasm"/>
    <property type="evidence" value="ECO:0007669"/>
    <property type="project" value="UniProtKB-SubCell"/>
</dbReference>
<dbReference type="GO" id="GO:0033739">
    <property type="term" value="F:preQ1 synthase activity"/>
    <property type="evidence" value="ECO:0007669"/>
    <property type="project" value="UniProtKB-UniRule"/>
</dbReference>
<dbReference type="GO" id="GO:0008616">
    <property type="term" value="P:queuosine biosynthetic process"/>
    <property type="evidence" value="ECO:0007669"/>
    <property type="project" value="UniProtKB-UniRule"/>
</dbReference>
<dbReference type="GO" id="GO:0006400">
    <property type="term" value="P:tRNA modification"/>
    <property type="evidence" value="ECO:0007669"/>
    <property type="project" value="UniProtKB-UniRule"/>
</dbReference>
<dbReference type="Gene3D" id="3.30.1130.10">
    <property type="match status" value="1"/>
</dbReference>
<dbReference type="HAMAP" id="MF_00818">
    <property type="entry name" value="QueF_type1"/>
    <property type="match status" value="1"/>
</dbReference>
<dbReference type="InterPro" id="IPR043133">
    <property type="entry name" value="GTP-CH-I_C/QueF"/>
</dbReference>
<dbReference type="InterPro" id="IPR050084">
    <property type="entry name" value="NADPH_dep_7-cyano-7-deazaG_red"/>
</dbReference>
<dbReference type="InterPro" id="IPR029500">
    <property type="entry name" value="QueF"/>
</dbReference>
<dbReference type="InterPro" id="IPR016856">
    <property type="entry name" value="QueF_type1"/>
</dbReference>
<dbReference type="NCBIfam" id="TIGR03139">
    <property type="entry name" value="QueF-II"/>
    <property type="match status" value="1"/>
</dbReference>
<dbReference type="PANTHER" id="PTHR34354">
    <property type="entry name" value="NADPH-DEPENDENT 7-CYANO-7-DEAZAGUANINE REDUCTASE"/>
    <property type="match status" value="1"/>
</dbReference>
<dbReference type="PANTHER" id="PTHR34354:SF1">
    <property type="entry name" value="NADPH-DEPENDENT 7-CYANO-7-DEAZAGUANINE REDUCTASE"/>
    <property type="match status" value="1"/>
</dbReference>
<dbReference type="Pfam" id="PF14489">
    <property type="entry name" value="QueF"/>
    <property type="match status" value="1"/>
</dbReference>
<dbReference type="PIRSF" id="PIRSF027377">
    <property type="entry name" value="Nitrile_oxidored_QueF"/>
    <property type="match status" value="1"/>
</dbReference>
<dbReference type="SUPFAM" id="SSF55620">
    <property type="entry name" value="Tetrahydrobiopterin biosynthesis enzymes-like"/>
    <property type="match status" value="1"/>
</dbReference>
<gene>
    <name evidence="1" type="primary">queF</name>
    <name type="ordered locus">SA0683</name>
</gene>
<reference key="1">
    <citation type="journal article" date="2001" name="Lancet">
        <title>Whole genome sequencing of meticillin-resistant Staphylococcus aureus.</title>
        <authorList>
            <person name="Kuroda M."/>
            <person name="Ohta T."/>
            <person name="Uchiyama I."/>
            <person name="Baba T."/>
            <person name="Yuzawa H."/>
            <person name="Kobayashi I."/>
            <person name="Cui L."/>
            <person name="Oguchi A."/>
            <person name="Aoki K."/>
            <person name="Nagai Y."/>
            <person name="Lian J.-Q."/>
            <person name="Ito T."/>
            <person name="Kanamori M."/>
            <person name="Matsumaru H."/>
            <person name="Maruyama A."/>
            <person name="Murakami H."/>
            <person name="Hosoyama A."/>
            <person name="Mizutani-Ui Y."/>
            <person name="Takahashi N.K."/>
            <person name="Sawano T."/>
            <person name="Inoue R."/>
            <person name="Kaito C."/>
            <person name="Sekimizu K."/>
            <person name="Hirakawa H."/>
            <person name="Kuhara S."/>
            <person name="Goto S."/>
            <person name="Yabuzaki J."/>
            <person name="Kanehisa M."/>
            <person name="Yamashita A."/>
            <person name="Oshima K."/>
            <person name="Furuya K."/>
            <person name="Yoshino C."/>
            <person name="Shiba T."/>
            <person name="Hattori M."/>
            <person name="Ogasawara N."/>
            <person name="Hayashi H."/>
            <person name="Hiramatsu K."/>
        </authorList>
    </citation>
    <scope>NUCLEOTIDE SEQUENCE [LARGE SCALE GENOMIC DNA]</scope>
    <source>
        <strain>N315</strain>
    </source>
</reference>